<evidence type="ECO:0000250" key="1"/>
<evidence type="ECO:0000250" key="2">
    <source>
        <dbReference type="UniProtKB" id="P00883"/>
    </source>
</evidence>
<evidence type="ECO:0000250" key="3">
    <source>
        <dbReference type="UniProtKB" id="P05065"/>
    </source>
</evidence>
<evidence type="ECO:0000250" key="4">
    <source>
        <dbReference type="UniProtKB" id="P09972"/>
    </source>
</evidence>
<evidence type="ECO:0000269" key="5">
    <source>
    </source>
</evidence>
<evidence type="ECO:0000269" key="6">
    <source>
    </source>
</evidence>
<evidence type="ECO:0000269" key="7">
    <source>
    </source>
</evidence>
<evidence type="ECO:0000269" key="8">
    <source>
    </source>
</evidence>
<evidence type="ECO:0000269" key="9">
    <source>
    </source>
</evidence>
<evidence type="ECO:0000269" key="10">
    <source>
    </source>
</evidence>
<evidence type="ECO:0000269" key="11">
    <source>
    </source>
</evidence>
<evidence type="ECO:0000269" key="12">
    <source>
    </source>
</evidence>
<evidence type="ECO:0000269" key="13">
    <source>
    </source>
</evidence>
<evidence type="ECO:0000269" key="14">
    <source>
    </source>
</evidence>
<evidence type="ECO:0000269" key="15">
    <source>
    </source>
</evidence>
<evidence type="ECO:0000269" key="16">
    <source>
    </source>
</evidence>
<evidence type="ECO:0000269" key="17">
    <source>
    </source>
</evidence>
<evidence type="ECO:0000269" key="18">
    <source>
    </source>
</evidence>
<evidence type="ECO:0000269" key="19">
    <source ref="15"/>
</evidence>
<evidence type="ECO:0000303" key="20">
    <source>
    </source>
</evidence>
<evidence type="ECO:0000305" key="21"/>
<evidence type="ECO:0000305" key="22">
    <source>
    </source>
</evidence>
<evidence type="ECO:0000312" key="23">
    <source>
        <dbReference type="HGNC" id="HGNC:414"/>
    </source>
</evidence>
<evidence type="ECO:0007744" key="24">
    <source>
    </source>
</evidence>
<evidence type="ECO:0007744" key="25">
    <source>
    </source>
</evidence>
<evidence type="ECO:0007744" key="26">
    <source>
    </source>
</evidence>
<evidence type="ECO:0007744" key="27">
    <source>
    </source>
</evidence>
<evidence type="ECO:0007744" key="28">
    <source>
    </source>
</evidence>
<evidence type="ECO:0007744" key="29">
    <source>
    </source>
</evidence>
<evidence type="ECO:0007744" key="30">
    <source>
    </source>
</evidence>
<evidence type="ECO:0007744" key="31">
    <source>
    </source>
</evidence>
<evidence type="ECO:0007744" key="32">
    <source>
    </source>
</evidence>
<evidence type="ECO:0007829" key="33">
    <source>
        <dbReference type="PDB" id="1ALD"/>
    </source>
</evidence>
<evidence type="ECO:0007829" key="34">
    <source>
        <dbReference type="PDB" id="5KY6"/>
    </source>
</evidence>
<evidence type="ECO:0007829" key="35">
    <source>
        <dbReference type="PDB" id="6XMH"/>
    </source>
</evidence>
<evidence type="ECO:0007829" key="36">
    <source>
        <dbReference type="PDB" id="6XML"/>
    </source>
</evidence>
<gene>
    <name evidence="23" type="primary">ALDOA</name>
    <name type="synonym">ALDA</name>
</gene>
<sequence length="364" mass="39420">MPYQYPALTPEQKKELSDIAHRIVAPGKGILAADESTGSIAKRLQSIGTENTEENRRFYRQLLLTADDRVNPCIGGVILFHETLYQKADDGRPFPQVIKSKGGVVGIKVDKGVVPLAGTNGETTTQGLDGLSERCAQYKKDGADFAKWRCVLKIGEHTPSALAIMENANVLARYASICQQNGIVPIVEPEILPDGDHDLKRCQYVTEKVLAAVYKALSDHHIYLEGTLLKPNMVTPGHACTQKFSHEEIAMATVTALRRTVPPAVTGITFLSGGQSEEEASINLNAINKCPLLKPWALTFSYGRALQASALKAWGGKKENLKAAQEEYVKRALANSLACQGKYTPSGQAGAAASESLFVSNHAY</sequence>
<dbReference type="EC" id="4.1.2.13" evidence="8 11"/>
<dbReference type="EMBL" id="M11560">
    <property type="protein sequence ID" value="AAA51690.1"/>
    <property type="molecule type" value="mRNA"/>
</dbReference>
<dbReference type="EMBL" id="X05236">
    <property type="protein sequence ID" value="CAA28861.1"/>
    <property type="molecule type" value="mRNA"/>
</dbReference>
<dbReference type="EMBL" id="X12447">
    <property type="protein sequence ID" value="CAA30979.1"/>
    <property type="molecule type" value="Genomic_DNA"/>
</dbReference>
<dbReference type="EMBL" id="AK301993">
    <property type="protein sequence ID" value="BAG63399.1"/>
    <property type="molecule type" value="mRNA"/>
</dbReference>
<dbReference type="EMBL" id="CR536528">
    <property type="protein sequence ID" value="CAG38765.1"/>
    <property type="molecule type" value="mRNA"/>
</dbReference>
<dbReference type="EMBL" id="CR541880">
    <property type="protein sequence ID" value="CAG46678.1"/>
    <property type="molecule type" value="mRNA"/>
</dbReference>
<dbReference type="EMBL" id="AC093512">
    <property type="status" value="NOT_ANNOTATED_CDS"/>
    <property type="molecule type" value="Genomic_DNA"/>
</dbReference>
<dbReference type="EMBL" id="CH471238">
    <property type="protein sequence ID" value="EAW79933.1"/>
    <property type="molecule type" value="Genomic_DNA"/>
</dbReference>
<dbReference type="EMBL" id="BC000367">
    <property type="protein sequence ID" value="AAH00367.2"/>
    <property type="molecule type" value="mRNA"/>
</dbReference>
<dbReference type="EMBL" id="BC004333">
    <property type="protein sequence ID" value="AAH04333.1"/>
    <property type="molecule type" value="mRNA"/>
</dbReference>
<dbReference type="EMBL" id="BC010660">
    <property type="protein sequence ID" value="AAH10660.1"/>
    <property type="molecule type" value="mRNA"/>
</dbReference>
<dbReference type="EMBL" id="BC012880">
    <property type="protein sequence ID" value="AAH12880.1"/>
    <property type="molecule type" value="mRNA"/>
</dbReference>
<dbReference type="EMBL" id="BC013614">
    <property type="protein sequence ID" value="AAH13614.1"/>
    <property type="molecule type" value="mRNA"/>
</dbReference>
<dbReference type="EMBL" id="BC015888">
    <property type="protein sequence ID" value="AAH15888.1"/>
    <property type="molecule type" value="mRNA"/>
</dbReference>
<dbReference type="EMBL" id="BC016170">
    <property type="protein sequence ID" value="AAH16170.1"/>
    <property type="molecule type" value="mRNA"/>
</dbReference>
<dbReference type="EMBL" id="BC016800">
    <property type="protein sequence ID" value="AAH16800.1"/>
    <property type="molecule type" value="mRNA"/>
</dbReference>
<dbReference type="EMBL" id="M21190">
    <property type="protein sequence ID" value="AAA51697.1"/>
    <property type="molecule type" value="mRNA"/>
</dbReference>
<dbReference type="CCDS" id="CCDS10668.1">
    <molecule id="P04075-1"/>
</dbReference>
<dbReference type="CCDS" id="CCDS58450.1">
    <molecule id="P04075-2"/>
</dbReference>
<dbReference type="PIR" id="S14084">
    <property type="entry name" value="ADHUA"/>
</dbReference>
<dbReference type="RefSeq" id="NP_000025.1">
    <property type="nucleotide sequence ID" value="NM_000034.3"/>
</dbReference>
<dbReference type="RefSeq" id="NP_001121089.1">
    <molecule id="P04075-1"/>
    <property type="nucleotide sequence ID" value="NM_001127617.2"/>
</dbReference>
<dbReference type="RefSeq" id="NP_001230106.1">
    <molecule id="P04075-2"/>
    <property type="nucleotide sequence ID" value="NM_001243177.4"/>
</dbReference>
<dbReference type="RefSeq" id="NP_908930.1">
    <molecule id="P04075-1"/>
    <property type="nucleotide sequence ID" value="NM_184041.5"/>
</dbReference>
<dbReference type="RefSeq" id="NP_908932.1">
    <molecule id="P04075-1"/>
    <property type="nucleotide sequence ID" value="NM_184043.2"/>
</dbReference>
<dbReference type="RefSeq" id="XP_011544070.1">
    <property type="nucleotide sequence ID" value="XM_011545768.2"/>
</dbReference>
<dbReference type="PDB" id="1ALD">
    <property type="method" value="X-ray"/>
    <property type="resolution" value="2.00 A"/>
    <property type="chains" value="A=2-364"/>
</dbReference>
<dbReference type="PDB" id="2ALD">
    <property type="method" value="X-ray"/>
    <property type="resolution" value="2.10 A"/>
    <property type="chains" value="A=2-364"/>
</dbReference>
<dbReference type="PDB" id="4ALD">
    <property type="method" value="X-ray"/>
    <property type="resolution" value="2.80 A"/>
    <property type="chains" value="A=2-364"/>
</dbReference>
<dbReference type="PDB" id="5KY6">
    <property type="method" value="X-ray"/>
    <property type="resolution" value="1.94 A"/>
    <property type="chains" value="A/B/C/D=2-364"/>
</dbReference>
<dbReference type="PDB" id="6XMH">
    <property type="method" value="X-ray"/>
    <property type="resolution" value="1.95 A"/>
    <property type="chains" value="A/B=1-364"/>
</dbReference>
<dbReference type="PDB" id="6XML">
    <property type="method" value="X-ray"/>
    <property type="resolution" value="1.88 A"/>
    <property type="chains" value="A/B=1-364"/>
</dbReference>
<dbReference type="PDB" id="6XMM">
    <property type="method" value="X-ray"/>
    <property type="resolution" value="2.11 A"/>
    <property type="chains" value="A/B=1-364"/>
</dbReference>
<dbReference type="PDB" id="6XMO">
    <property type="method" value="X-ray"/>
    <property type="resolution" value="2.60 A"/>
    <property type="chains" value="A/B=1-364"/>
</dbReference>
<dbReference type="PDBsum" id="1ALD"/>
<dbReference type="PDBsum" id="2ALD"/>
<dbReference type="PDBsum" id="4ALD"/>
<dbReference type="PDBsum" id="5KY6"/>
<dbReference type="PDBsum" id="6XMH"/>
<dbReference type="PDBsum" id="6XML"/>
<dbReference type="PDBsum" id="6XMM"/>
<dbReference type="PDBsum" id="6XMO"/>
<dbReference type="SMR" id="P04075"/>
<dbReference type="BioGRID" id="106728">
    <property type="interactions" value="342"/>
</dbReference>
<dbReference type="FunCoup" id="P04075">
    <property type="interactions" value="1506"/>
</dbReference>
<dbReference type="IntAct" id="P04075">
    <property type="interactions" value="92"/>
</dbReference>
<dbReference type="MINT" id="P04075"/>
<dbReference type="STRING" id="9606.ENSP00000496166"/>
<dbReference type="ChEMBL" id="CHEMBL2106"/>
<dbReference type="DrugBank" id="DB04733">
    <property type="generic name" value="1,6-DI-O-PHOSPHONO-D-MANNITOL"/>
</dbReference>
<dbReference type="DrugBank" id="DB02512">
    <property type="generic name" value="1,6-Fructose Diphosphate (Linear Form)"/>
</dbReference>
<dbReference type="DrugBank" id="DB11638">
    <property type="generic name" value="Artenimol"/>
</dbReference>
<dbReference type="DrugBank" id="DB04326">
    <property type="generic name" value="Dihydroxyacetone phosphate"/>
</dbReference>
<dbReference type="DrugBank" id="DB08240">
    <property type="generic name" value="N-(4-CHLOROPHENYL)-3-(PHOSPHONOOXY)NAPHTHALENE-2-CARBOXAMIDE"/>
</dbReference>
<dbReference type="DrugBank" id="DB01593">
    <property type="generic name" value="Zinc"/>
</dbReference>
<dbReference type="DrugBank" id="DB14487">
    <property type="generic name" value="Zinc acetate"/>
</dbReference>
<dbReference type="DrugBank" id="DB14533">
    <property type="generic name" value="Zinc chloride"/>
</dbReference>
<dbReference type="DrugBank" id="DB14548">
    <property type="generic name" value="Zinc sulfate, unspecified form"/>
</dbReference>
<dbReference type="MoonProt" id="P04075"/>
<dbReference type="CarbonylDB" id="P04075"/>
<dbReference type="GlyGen" id="P04075">
    <property type="glycosylation" value="3 sites, 1 O-linked glycan (2 sites)"/>
</dbReference>
<dbReference type="iPTMnet" id="P04075"/>
<dbReference type="MetOSite" id="P04075"/>
<dbReference type="PhosphoSitePlus" id="P04075"/>
<dbReference type="SwissPalm" id="P04075"/>
<dbReference type="BioMuta" id="ALDOA"/>
<dbReference type="DMDM" id="113606"/>
<dbReference type="OGP" id="P04075"/>
<dbReference type="REPRODUCTION-2DPAGE" id="IPI00465439"/>
<dbReference type="REPRODUCTION-2DPAGE" id="P04075"/>
<dbReference type="CPTAC" id="CPTAC-2718"/>
<dbReference type="CPTAC" id="CPTAC-2719"/>
<dbReference type="CPTAC" id="CPTAC-459"/>
<dbReference type="jPOST" id="P04075"/>
<dbReference type="MassIVE" id="P04075"/>
<dbReference type="PaxDb" id="9606-ENSP00000378669"/>
<dbReference type="PeptideAtlas" id="P04075"/>
<dbReference type="PRIDE" id="P04075"/>
<dbReference type="ProteomicsDB" id="51647">
    <molecule id="P04075-1"/>
</dbReference>
<dbReference type="Pumba" id="P04075"/>
<dbReference type="TopDownProteomics" id="P04075-1">
    <molecule id="P04075-1"/>
</dbReference>
<dbReference type="Antibodypedia" id="1031">
    <property type="antibodies" value="702 antibodies from 38 providers"/>
</dbReference>
<dbReference type="DNASU" id="226"/>
<dbReference type="Ensembl" id="ENST00000412304.6">
    <molecule id="P04075-1"/>
    <property type="protein sequence ID" value="ENSP00000400452.2"/>
    <property type="gene ID" value="ENSG00000149925.22"/>
</dbReference>
<dbReference type="Ensembl" id="ENST00000563060.6">
    <molecule id="P04075-1"/>
    <property type="protein sequence ID" value="ENSP00000455800.2"/>
    <property type="gene ID" value="ENSG00000149925.22"/>
</dbReference>
<dbReference type="Ensembl" id="ENST00000569545.5">
    <molecule id="P04075-1"/>
    <property type="protein sequence ID" value="ENSP00000455700.1"/>
    <property type="gene ID" value="ENSG00000149925.22"/>
</dbReference>
<dbReference type="Ensembl" id="ENST00000642816.3">
    <molecule id="P04075-2"/>
    <property type="protein sequence ID" value="ENSP00000496166.1"/>
    <property type="gene ID" value="ENSG00000149925.22"/>
</dbReference>
<dbReference type="Ensembl" id="ENST00000643777.4">
    <molecule id="P04075-1"/>
    <property type="protein sequence ID" value="ENSP00000494188.2"/>
    <property type="gene ID" value="ENSG00000149925.22"/>
</dbReference>
<dbReference type="GeneID" id="226"/>
<dbReference type="KEGG" id="hsa:226"/>
<dbReference type="MANE-Select" id="ENST00000642816.3">
    <molecule id="P04075-2"/>
    <property type="protein sequence ID" value="ENSP00000496166.1"/>
    <property type="RefSeq nucleotide sequence ID" value="NM_001243177.4"/>
    <property type="RefSeq protein sequence ID" value="NP_001230106.1"/>
</dbReference>
<dbReference type="UCSC" id="uc010veg.3">
    <molecule id="P04075-1"/>
    <property type="organism name" value="human"/>
</dbReference>
<dbReference type="AGR" id="HGNC:414"/>
<dbReference type="CTD" id="226"/>
<dbReference type="DisGeNET" id="226"/>
<dbReference type="GeneCards" id="ALDOA"/>
<dbReference type="HGNC" id="HGNC:414">
    <property type="gene designation" value="ALDOA"/>
</dbReference>
<dbReference type="HPA" id="ENSG00000149925">
    <property type="expression patterns" value="Group enriched (skeletal muscle, tongue)"/>
</dbReference>
<dbReference type="MalaCards" id="ALDOA"/>
<dbReference type="MIM" id="103850">
    <property type="type" value="gene"/>
</dbReference>
<dbReference type="MIM" id="611881">
    <property type="type" value="phenotype"/>
</dbReference>
<dbReference type="neXtProt" id="NX_P04075"/>
<dbReference type="OpenTargets" id="ENSG00000149925"/>
<dbReference type="Orphanet" id="57">
    <property type="disease" value="Glycogen storage disease due to aldolase A deficiency"/>
</dbReference>
<dbReference type="PharmGKB" id="PA24707"/>
<dbReference type="VEuPathDB" id="HostDB:ENSG00000149925"/>
<dbReference type="eggNOG" id="KOG1557">
    <property type="taxonomic scope" value="Eukaryota"/>
</dbReference>
<dbReference type="GeneTree" id="ENSGT00950000182987"/>
<dbReference type="HOGENOM" id="CLU_031243_0_0_1"/>
<dbReference type="InParanoid" id="P04075"/>
<dbReference type="OMA" id="WRAVITI"/>
<dbReference type="OrthoDB" id="36455at2759"/>
<dbReference type="PAN-GO" id="P04075">
    <property type="GO annotations" value="4 GO annotations based on evolutionary models"/>
</dbReference>
<dbReference type="PhylomeDB" id="P04075"/>
<dbReference type="TreeFam" id="TF314203"/>
<dbReference type="BioCyc" id="MetaCyc:HS07647-MONOMER"/>
<dbReference type="BRENDA" id="4.1.2.13">
    <property type="organism ID" value="2681"/>
</dbReference>
<dbReference type="PathwayCommons" id="P04075"/>
<dbReference type="Reactome" id="R-HSA-114608">
    <property type="pathway name" value="Platelet degranulation"/>
</dbReference>
<dbReference type="Reactome" id="R-HSA-6798695">
    <property type="pathway name" value="Neutrophil degranulation"/>
</dbReference>
<dbReference type="Reactome" id="R-HSA-70171">
    <property type="pathway name" value="Glycolysis"/>
</dbReference>
<dbReference type="Reactome" id="R-HSA-70263">
    <property type="pathway name" value="Gluconeogenesis"/>
</dbReference>
<dbReference type="SABIO-RK" id="P04075"/>
<dbReference type="SignaLink" id="P04075"/>
<dbReference type="SIGNOR" id="P04075"/>
<dbReference type="UniPathway" id="UPA00109">
    <property type="reaction ID" value="UER00183"/>
</dbReference>
<dbReference type="BioGRID-ORCS" id="226">
    <property type="hits" value="801 hits in 1177 CRISPR screens"/>
</dbReference>
<dbReference type="ChiTaRS" id="ALDOA">
    <property type="organism name" value="human"/>
</dbReference>
<dbReference type="EvolutionaryTrace" id="P04075"/>
<dbReference type="GeneWiki" id="Aldolase_A"/>
<dbReference type="GenomeRNAi" id="226"/>
<dbReference type="Pharos" id="P04075">
    <property type="development level" value="Tbio"/>
</dbReference>
<dbReference type="PRO" id="PR:P04075"/>
<dbReference type="Proteomes" id="UP000005640">
    <property type="component" value="Chromosome 16"/>
</dbReference>
<dbReference type="RNAct" id="P04075">
    <property type="molecule type" value="protein"/>
</dbReference>
<dbReference type="Bgee" id="ENSG00000149925">
    <property type="expression patterns" value="Expressed in gastrocnemius and 96 other cell types or tissues"/>
</dbReference>
<dbReference type="ExpressionAtlas" id="P04075">
    <property type="expression patterns" value="baseline and differential"/>
</dbReference>
<dbReference type="GO" id="GO:0015629">
    <property type="term" value="C:actin cytoskeleton"/>
    <property type="evidence" value="ECO:0000314"/>
    <property type="project" value="BHF-UCL"/>
</dbReference>
<dbReference type="GO" id="GO:0005829">
    <property type="term" value="C:cytosol"/>
    <property type="evidence" value="ECO:0000318"/>
    <property type="project" value="GO_Central"/>
</dbReference>
<dbReference type="GO" id="GO:0070062">
    <property type="term" value="C:extracellular exosome"/>
    <property type="evidence" value="ECO:0000314"/>
    <property type="project" value="BHF-UCL"/>
</dbReference>
<dbReference type="GO" id="GO:0005576">
    <property type="term" value="C:extracellular region"/>
    <property type="evidence" value="ECO:0000304"/>
    <property type="project" value="Reactome"/>
</dbReference>
<dbReference type="GO" id="GO:0005615">
    <property type="term" value="C:extracellular space"/>
    <property type="evidence" value="ECO:0007005"/>
    <property type="project" value="UniProtKB"/>
</dbReference>
<dbReference type="GO" id="GO:1904813">
    <property type="term" value="C:ficolin-1-rich granule lumen"/>
    <property type="evidence" value="ECO:0000304"/>
    <property type="project" value="Reactome"/>
</dbReference>
<dbReference type="GO" id="GO:0031674">
    <property type="term" value="C:I band"/>
    <property type="evidence" value="ECO:0000304"/>
    <property type="project" value="BHF-UCL"/>
</dbReference>
<dbReference type="GO" id="GO:0031430">
    <property type="term" value="C:M band"/>
    <property type="evidence" value="ECO:0007669"/>
    <property type="project" value="UniProtKB-SubCell"/>
</dbReference>
<dbReference type="GO" id="GO:0016020">
    <property type="term" value="C:membrane"/>
    <property type="evidence" value="ECO:0007005"/>
    <property type="project" value="UniProtKB"/>
</dbReference>
<dbReference type="GO" id="GO:0005634">
    <property type="term" value="C:nucleus"/>
    <property type="evidence" value="ECO:0007005"/>
    <property type="project" value="UniProtKB"/>
</dbReference>
<dbReference type="GO" id="GO:0031093">
    <property type="term" value="C:platelet alpha granule lumen"/>
    <property type="evidence" value="ECO:0000304"/>
    <property type="project" value="Reactome"/>
</dbReference>
<dbReference type="GO" id="GO:0034774">
    <property type="term" value="C:secretory granule lumen"/>
    <property type="evidence" value="ECO:0000304"/>
    <property type="project" value="Reactome"/>
</dbReference>
<dbReference type="GO" id="GO:0061827">
    <property type="term" value="C:sperm head"/>
    <property type="evidence" value="ECO:0000314"/>
    <property type="project" value="CAFA"/>
</dbReference>
<dbReference type="GO" id="GO:1904724">
    <property type="term" value="C:tertiary granule lumen"/>
    <property type="evidence" value="ECO:0000304"/>
    <property type="project" value="Reactome"/>
</dbReference>
<dbReference type="GO" id="GO:0003779">
    <property type="term" value="F:actin binding"/>
    <property type="evidence" value="ECO:0000304"/>
    <property type="project" value="BHF-UCL"/>
</dbReference>
<dbReference type="GO" id="GO:0045296">
    <property type="term" value="F:cadherin binding"/>
    <property type="evidence" value="ECO:0007005"/>
    <property type="project" value="BHF-UCL"/>
</dbReference>
<dbReference type="GO" id="GO:0008092">
    <property type="term" value="F:cytoskeletal protein binding"/>
    <property type="evidence" value="ECO:0000314"/>
    <property type="project" value="BHF-UCL"/>
</dbReference>
<dbReference type="GO" id="GO:0070061">
    <property type="term" value="F:fructose binding"/>
    <property type="evidence" value="ECO:0000314"/>
    <property type="project" value="BHF-UCL"/>
</dbReference>
<dbReference type="GO" id="GO:0004332">
    <property type="term" value="F:fructose-bisphosphate aldolase activity"/>
    <property type="evidence" value="ECO:0000314"/>
    <property type="project" value="BHF-UCL"/>
</dbReference>
<dbReference type="GO" id="GO:0042802">
    <property type="term" value="F:identical protein binding"/>
    <property type="evidence" value="ECO:0000353"/>
    <property type="project" value="IntAct"/>
</dbReference>
<dbReference type="GO" id="GO:0003723">
    <property type="term" value="F:RNA binding"/>
    <property type="evidence" value="ECO:0007005"/>
    <property type="project" value="UniProtKB"/>
</dbReference>
<dbReference type="GO" id="GO:0015631">
    <property type="term" value="F:tubulin binding"/>
    <property type="evidence" value="ECO:0000304"/>
    <property type="project" value="BHF-UCL"/>
</dbReference>
<dbReference type="GO" id="GO:0007015">
    <property type="term" value="P:actin filament organization"/>
    <property type="evidence" value="ECO:0000304"/>
    <property type="project" value="BHF-UCL"/>
</dbReference>
<dbReference type="GO" id="GO:0006754">
    <property type="term" value="P:ATP biosynthetic process"/>
    <property type="evidence" value="ECO:0000315"/>
    <property type="project" value="BHF-UCL"/>
</dbReference>
<dbReference type="GO" id="GO:0007339">
    <property type="term" value="P:binding of sperm to zona pellucida"/>
    <property type="evidence" value="ECO:0000315"/>
    <property type="project" value="CAFA"/>
</dbReference>
<dbReference type="GO" id="GO:0030388">
    <property type="term" value="P:fructose 1,6-bisphosphate metabolic process"/>
    <property type="evidence" value="ECO:0000314"/>
    <property type="project" value="BHF-UCL"/>
</dbReference>
<dbReference type="GO" id="GO:0006000">
    <property type="term" value="P:fructose metabolic process"/>
    <property type="evidence" value="ECO:0000315"/>
    <property type="project" value="BHF-UCL"/>
</dbReference>
<dbReference type="GO" id="GO:0006096">
    <property type="term" value="P:glycolytic process"/>
    <property type="evidence" value="ECO:0000315"/>
    <property type="project" value="BHF-UCL"/>
</dbReference>
<dbReference type="GO" id="GO:0046716">
    <property type="term" value="P:muscle cell cellular homeostasis"/>
    <property type="evidence" value="ECO:0000315"/>
    <property type="project" value="BHF-UCL"/>
</dbReference>
<dbReference type="GO" id="GO:0051289">
    <property type="term" value="P:protein homotetramerization"/>
    <property type="evidence" value="ECO:0000250"/>
    <property type="project" value="UniProtKB"/>
</dbReference>
<dbReference type="GO" id="GO:0008360">
    <property type="term" value="P:regulation of cell shape"/>
    <property type="evidence" value="ECO:0000314"/>
    <property type="project" value="BHF-UCL"/>
</dbReference>
<dbReference type="GO" id="GO:0006941">
    <property type="term" value="P:striated muscle contraction"/>
    <property type="evidence" value="ECO:0000315"/>
    <property type="project" value="BHF-UCL"/>
</dbReference>
<dbReference type="CDD" id="cd00948">
    <property type="entry name" value="FBP_aldolase_I_a"/>
    <property type="match status" value="1"/>
</dbReference>
<dbReference type="FunFam" id="3.20.20.70:FF:000021">
    <property type="entry name" value="Fructose-bisphosphate aldolase"/>
    <property type="match status" value="1"/>
</dbReference>
<dbReference type="Gene3D" id="3.20.20.70">
    <property type="entry name" value="Aldolase class I"/>
    <property type="match status" value="1"/>
</dbReference>
<dbReference type="InterPro" id="IPR029768">
    <property type="entry name" value="Aldolase_I_AS"/>
</dbReference>
<dbReference type="InterPro" id="IPR013785">
    <property type="entry name" value="Aldolase_TIM"/>
</dbReference>
<dbReference type="InterPro" id="IPR000741">
    <property type="entry name" value="FBA_I"/>
</dbReference>
<dbReference type="NCBIfam" id="NF033379">
    <property type="entry name" value="FrucBisAld_I"/>
    <property type="match status" value="1"/>
</dbReference>
<dbReference type="PANTHER" id="PTHR11627">
    <property type="entry name" value="FRUCTOSE-BISPHOSPHATE ALDOLASE"/>
    <property type="match status" value="1"/>
</dbReference>
<dbReference type="Pfam" id="PF00274">
    <property type="entry name" value="Glycolytic"/>
    <property type="match status" value="1"/>
</dbReference>
<dbReference type="SUPFAM" id="SSF51569">
    <property type="entry name" value="Aldolase"/>
    <property type="match status" value="1"/>
</dbReference>
<dbReference type="PROSITE" id="PS00158">
    <property type="entry name" value="ALDOLASE_CLASS_I"/>
    <property type="match status" value="1"/>
</dbReference>
<proteinExistence type="evidence at protein level"/>
<organism>
    <name type="scientific">Homo sapiens</name>
    <name type="common">Human</name>
    <dbReference type="NCBI Taxonomy" id="9606"/>
    <lineage>
        <taxon>Eukaryota</taxon>
        <taxon>Metazoa</taxon>
        <taxon>Chordata</taxon>
        <taxon>Craniata</taxon>
        <taxon>Vertebrata</taxon>
        <taxon>Euteleostomi</taxon>
        <taxon>Mammalia</taxon>
        <taxon>Eutheria</taxon>
        <taxon>Euarchontoglires</taxon>
        <taxon>Primates</taxon>
        <taxon>Haplorrhini</taxon>
        <taxon>Catarrhini</taxon>
        <taxon>Hominidae</taxon>
        <taxon>Homo</taxon>
    </lineage>
</organism>
<keyword id="KW-0002">3D-structure</keyword>
<keyword id="KW-0007">Acetylation</keyword>
<keyword id="KW-0025">Alternative splicing</keyword>
<keyword id="KW-0963">Cytoplasm</keyword>
<keyword id="KW-0903">Direct protein sequencing</keyword>
<keyword id="KW-0225">Disease variant</keyword>
<keyword id="KW-0322">Glycogen storage disease</keyword>
<keyword id="KW-0324">Glycolysis</keyword>
<keyword id="KW-0360">Hereditary hemolytic anemia</keyword>
<keyword id="KW-0379">Hydroxylation</keyword>
<keyword id="KW-1017">Isopeptide bond</keyword>
<keyword id="KW-0456">Lyase</keyword>
<keyword id="KW-0597">Phosphoprotein</keyword>
<keyword id="KW-1267">Proteomics identification</keyword>
<keyword id="KW-1185">Reference proteome</keyword>
<keyword id="KW-0704">Schiff base</keyword>
<keyword id="KW-0832">Ubl conjugation</keyword>
<comment type="function">
    <text evidence="1 8">Catalyzes the reversible conversion of beta-D-fructose 1,6-bisphosphate (FBP) into two triose phosphate and plays a key role in glycolysis and gluconeogenesis (PubMed:14766013). In addition, may also function as scaffolding protein (By similarity).</text>
</comment>
<comment type="catalytic activity">
    <reaction evidence="8 11">
        <text>beta-D-fructose 1,6-bisphosphate = D-glyceraldehyde 3-phosphate + dihydroxyacetone phosphate</text>
        <dbReference type="Rhea" id="RHEA:14729"/>
        <dbReference type="ChEBI" id="CHEBI:32966"/>
        <dbReference type="ChEBI" id="CHEBI:57642"/>
        <dbReference type="ChEBI" id="CHEBI:59776"/>
        <dbReference type="EC" id="4.1.2.13"/>
    </reaction>
    <physiologicalReaction direction="left-to-right" evidence="22">
        <dbReference type="Rhea" id="RHEA:14730"/>
    </physiologicalReaction>
</comment>
<comment type="biophysicochemical properties">
    <kinetics>
        <KM evidence="8">52 uM for fructose 1,6-bisphosphate (at 30 degrees Celsius)</KM>
        <KM evidence="11">24 uM for fructose-l,6-bisphosphate</KM>
    </kinetics>
    <temperatureDependence>
        <text evidence="8">Thermal denaturation midpoint (Tm) is 54.4 degrees Celsius.</text>
    </temperatureDependence>
</comment>
<comment type="pathway">
    <text>Carbohydrate degradation; glycolysis; D-glyceraldehyde 3-phosphate and glycerone phosphate from D-glucose: step 4/4.</text>
</comment>
<comment type="subunit">
    <text evidence="1 9">Homotetramer. Interacts with SNX9 and WAS (By similarity). Interacts with FBP2; the interaction blocks FBP2 inhibition by physiological concentrations of AMP and reduces inhibition by Ca(2+).</text>
</comment>
<comment type="interaction">
    <interactant intactId="EBI-709613">
        <id>P04075</id>
    </interactant>
    <interactant intactId="EBI-709613">
        <id>P04075</id>
        <label>ALDOA</label>
    </interactant>
    <organismsDiffer>false</organismsDiffer>
    <experiments>2</experiments>
</comment>
<comment type="interaction">
    <interactant intactId="EBI-709613">
        <id>P04075</id>
    </interactant>
    <interactant intactId="EBI-1045507">
        <id>P05062</id>
        <label>ALDOB</label>
    </interactant>
    <organismsDiffer>false</organismsDiffer>
    <experiments>3</experiments>
</comment>
<comment type="interaction">
    <interactant intactId="EBI-709613">
        <id>P04075</id>
    </interactant>
    <interactant intactId="EBI-2952751">
        <id>P09972</id>
        <label>ALDOC</label>
    </interactant>
    <organismsDiffer>false</organismsDiffer>
    <experiments>5</experiments>
</comment>
<comment type="interaction">
    <interactant intactId="EBI-709613">
        <id>P04075</id>
    </interactant>
    <interactant intactId="EBI-2339854">
        <id>Q86X55</id>
        <label>CARM1</label>
    </interactant>
    <organismsDiffer>false</organismsDiffer>
    <experiments>2</experiments>
</comment>
<comment type="interaction">
    <interactant intactId="EBI-709613">
        <id>P04075</id>
    </interactant>
    <interactant intactId="EBI-358311">
        <id>P12004</id>
        <label>PCNA</label>
    </interactant>
    <organismsDiffer>false</organismsDiffer>
    <experiments>3</experiments>
</comment>
<comment type="interaction">
    <interactant intactId="EBI-10194102">
        <id>P04075-2</id>
    </interactant>
    <interactant intactId="EBI-10194102">
        <id>P04075-2</id>
        <label>ALDOA</label>
    </interactant>
    <organismsDiffer>false</organismsDiffer>
    <experiments>4</experiments>
</comment>
<comment type="interaction">
    <interactant intactId="EBI-10194102">
        <id>P04075-2</id>
    </interactant>
    <interactant intactId="EBI-2952751">
        <id>P09972</id>
        <label>ALDOC</label>
    </interactant>
    <organismsDiffer>false</organismsDiffer>
    <experiments>6</experiments>
</comment>
<comment type="interaction">
    <interactant intactId="EBI-10194102">
        <id>P04075-2</id>
    </interactant>
    <interactant intactId="EBI-466029">
        <id>P42858</id>
        <label>HTT</label>
    </interactant>
    <organismsDiffer>false</organismsDiffer>
    <experiments>6</experiments>
</comment>
<comment type="interaction">
    <interactant intactId="EBI-10194102">
        <id>P04075-2</id>
    </interactant>
    <interactant intactId="EBI-10194381">
        <id>P05014</id>
        <label>IFNA4</label>
    </interactant>
    <organismsDiffer>false</organismsDiffer>
    <experiments>3</experiments>
</comment>
<comment type="subcellular location">
    <subcellularLocation>
        <location evidence="2">Cytoplasm</location>
        <location evidence="2">Myofibril</location>
        <location evidence="2">Sarcomere</location>
        <location evidence="2">I band</location>
    </subcellularLocation>
    <subcellularLocation>
        <location evidence="2">Cytoplasm</location>
        <location evidence="2">Myofibril</location>
        <location evidence="2">Sarcomere</location>
        <location evidence="2">M line</location>
    </subcellularLocation>
    <text evidence="2">In skeletal muscle, accumulates around the M line and within the I band, colocalizing with FBP2 on both sides of the Z line in the absence of Ca(2+).</text>
</comment>
<comment type="alternative products">
    <event type="alternative splicing"/>
    <isoform>
        <id>P04075-1</id>
        <name>1</name>
        <sequence type="displayed"/>
    </isoform>
    <isoform>
        <id>P04075-2</id>
        <name>2</name>
        <sequence type="described" ref="VSP_047261"/>
    </isoform>
</comment>
<comment type="disease" evidence="7 8 12 13 18">
    <disease id="DI-01176">
        <name>Glycogen storage disease 12</name>
        <acronym>GSD12</acronym>
        <description>A metabolic disorder associated with increased hepatic glycogen and hemolytic anemia. It may lead to myopathy with exercise intolerance and rhabdomyolysis.</description>
        <dbReference type="MIM" id="611881"/>
    </disease>
    <text>The disease is caused by variants affecting the gene represented in this entry.</text>
</comment>
<comment type="miscellaneous">
    <text>In vertebrates, three forms of this ubiquitous glycolytic enzyme are found, aldolase A in muscle, aldolase B in liver and aldolase C in brain.</text>
</comment>
<comment type="similarity">
    <text evidence="21">Belongs to the class I fructose-bisphosphate aldolase family.</text>
</comment>
<reference key="1">
    <citation type="journal article" date="1985" name="Biochem. Biophys. Res. Commun.">
        <title>Nucleotide sequence of a cDNA clone for human aldolase: a messenger RNA in the liver.</title>
        <authorList>
            <person name="Sakakibara M."/>
            <person name="Mukai T."/>
            <person name="Hori K."/>
        </authorList>
    </citation>
    <scope>NUCLEOTIDE SEQUENCE [MRNA] (ISOFORM 1)</scope>
    <source>
        <tissue>Liver</tissue>
    </source>
</reference>
<reference key="2">
    <citation type="journal article" date="1987" name="Eur. J. Biochem.">
        <title>A new human species of aldolase A mRNA from fibroblasts.</title>
        <authorList>
            <person name="Izzo P."/>
            <person name="Costanzo P."/>
            <person name="Lupo A."/>
            <person name="Rippa E."/>
            <person name="Borghese A.M."/>
            <person name="Paolella G."/>
            <person name="Salvatore F."/>
        </authorList>
    </citation>
    <scope>NUCLEOTIDE SEQUENCE [MRNA] (ISOFORM 1)</scope>
    <source>
        <tissue>Fibroblast</tissue>
    </source>
</reference>
<reference key="3">
    <citation type="journal article" date="1988" name="Eur. J. Biochem.">
        <title>Human aldolase A gene. Structural organization and tissue-specific expression by multiple promoters and alternate mRNA processing.</title>
        <authorList>
            <person name="Izzo P."/>
            <person name="Costanzo P."/>
            <person name="Lupo A."/>
            <person name="Rippa E."/>
            <person name="Paolella G."/>
            <person name="Salvatore F."/>
        </authorList>
    </citation>
    <scope>NUCLEOTIDE SEQUENCE [MRNA] (ISOFORM 1)</scope>
</reference>
<reference key="4">
    <citation type="journal article" date="1991" name="Eur. J. Biochem.">
        <title>An additional promoter functions in the human aldolase A gene, but not in rat.</title>
        <authorList>
            <person name="Mukai T."/>
            <person name="Arai Y."/>
            <person name="Yatsuki H."/>
            <person name="Joh K."/>
            <person name="Hori K."/>
        </authorList>
    </citation>
    <scope>NUCLEOTIDE SEQUENCE [MRNA] (ISOFORM 1)</scope>
</reference>
<reference key="5">
    <citation type="journal article" date="2004" name="Nat. Genet.">
        <title>Complete sequencing and characterization of 21,243 full-length human cDNAs.</title>
        <authorList>
            <person name="Ota T."/>
            <person name="Suzuki Y."/>
            <person name="Nishikawa T."/>
            <person name="Otsuki T."/>
            <person name="Sugiyama T."/>
            <person name="Irie R."/>
            <person name="Wakamatsu A."/>
            <person name="Hayashi K."/>
            <person name="Sato H."/>
            <person name="Nagai K."/>
            <person name="Kimura K."/>
            <person name="Makita H."/>
            <person name="Sekine M."/>
            <person name="Obayashi M."/>
            <person name="Nishi T."/>
            <person name="Shibahara T."/>
            <person name="Tanaka T."/>
            <person name="Ishii S."/>
            <person name="Yamamoto J."/>
            <person name="Saito K."/>
            <person name="Kawai Y."/>
            <person name="Isono Y."/>
            <person name="Nakamura Y."/>
            <person name="Nagahari K."/>
            <person name="Murakami K."/>
            <person name="Yasuda T."/>
            <person name="Iwayanagi T."/>
            <person name="Wagatsuma M."/>
            <person name="Shiratori A."/>
            <person name="Sudo H."/>
            <person name="Hosoiri T."/>
            <person name="Kaku Y."/>
            <person name="Kodaira H."/>
            <person name="Kondo H."/>
            <person name="Sugawara M."/>
            <person name="Takahashi M."/>
            <person name="Kanda K."/>
            <person name="Yokoi T."/>
            <person name="Furuya T."/>
            <person name="Kikkawa E."/>
            <person name="Omura Y."/>
            <person name="Abe K."/>
            <person name="Kamihara K."/>
            <person name="Katsuta N."/>
            <person name="Sato K."/>
            <person name="Tanikawa M."/>
            <person name="Yamazaki M."/>
            <person name="Ninomiya K."/>
            <person name="Ishibashi T."/>
            <person name="Yamashita H."/>
            <person name="Murakawa K."/>
            <person name="Fujimori K."/>
            <person name="Tanai H."/>
            <person name="Kimata M."/>
            <person name="Watanabe M."/>
            <person name="Hiraoka S."/>
            <person name="Chiba Y."/>
            <person name="Ishida S."/>
            <person name="Ono Y."/>
            <person name="Takiguchi S."/>
            <person name="Watanabe S."/>
            <person name="Yosida M."/>
            <person name="Hotuta T."/>
            <person name="Kusano J."/>
            <person name="Kanehori K."/>
            <person name="Takahashi-Fujii A."/>
            <person name="Hara H."/>
            <person name="Tanase T.-O."/>
            <person name="Nomura Y."/>
            <person name="Togiya S."/>
            <person name="Komai F."/>
            <person name="Hara R."/>
            <person name="Takeuchi K."/>
            <person name="Arita M."/>
            <person name="Imose N."/>
            <person name="Musashino K."/>
            <person name="Yuuki H."/>
            <person name="Oshima A."/>
            <person name="Sasaki N."/>
            <person name="Aotsuka S."/>
            <person name="Yoshikawa Y."/>
            <person name="Matsunawa H."/>
            <person name="Ichihara T."/>
            <person name="Shiohata N."/>
            <person name="Sano S."/>
            <person name="Moriya S."/>
            <person name="Momiyama H."/>
            <person name="Satoh N."/>
            <person name="Takami S."/>
            <person name="Terashima Y."/>
            <person name="Suzuki O."/>
            <person name="Nakagawa S."/>
            <person name="Senoh A."/>
            <person name="Mizoguchi H."/>
            <person name="Goto Y."/>
            <person name="Shimizu F."/>
            <person name="Wakebe H."/>
            <person name="Hishigaki H."/>
            <person name="Watanabe T."/>
            <person name="Sugiyama A."/>
            <person name="Takemoto M."/>
            <person name="Kawakami B."/>
            <person name="Yamazaki M."/>
            <person name="Watanabe K."/>
            <person name="Kumagai A."/>
            <person name="Itakura S."/>
            <person name="Fukuzumi Y."/>
            <person name="Fujimori Y."/>
            <person name="Komiyama M."/>
            <person name="Tashiro H."/>
            <person name="Tanigami A."/>
            <person name="Fujiwara T."/>
            <person name="Ono T."/>
            <person name="Yamada K."/>
            <person name="Fujii Y."/>
            <person name="Ozaki K."/>
            <person name="Hirao M."/>
            <person name="Ohmori Y."/>
            <person name="Kawabata A."/>
            <person name="Hikiji T."/>
            <person name="Kobatake N."/>
            <person name="Inagaki H."/>
            <person name="Ikema Y."/>
            <person name="Okamoto S."/>
            <person name="Okitani R."/>
            <person name="Kawakami T."/>
            <person name="Noguchi S."/>
            <person name="Itoh T."/>
            <person name="Shigeta K."/>
            <person name="Senba T."/>
            <person name="Matsumura K."/>
            <person name="Nakajima Y."/>
            <person name="Mizuno T."/>
            <person name="Morinaga M."/>
            <person name="Sasaki M."/>
            <person name="Togashi T."/>
            <person name="Oyama M."/>
            <person name="Hata H."/>
            <person name="Watanabe M."/>
            <person name="Komatsu T."/>
            <person name="Mizushima-Sugano J."/>
            <person name="Satoh T."/>
            <person name="Shirai Y."/>
            <person name="Takahashi Y."/>
            <person name="Nakagawa K."/>
            <person name="Okumura K."/>
            <person name="Nagase T."/>
            <person name="Nomura N."/>
            <person name="Kikuchi H."/>
            <person name="Masuho Y."/>
            <person name="Yamashita R."/>
            <person name="Nakai K."/>
            <person name="Yada T."/>
            <person name="Nakamura Y."/>
            <person name="Ohara O."/>
            <person name="Isogai T."/>
            <person name="Sugano S."/>
        </authorList>
    </citation>
    <scope>NUCLEOTIDE SEQUENCE [LARGE SCALE MRNA] (ISOFORM 2)</scope>
    <source>
        <tissue>Testis</tissue>
    </source>
</reference>
<reference key="6">
    <citation type="submission" date="2004-06" db="EMBL/GenBank/DDBJ databases">
        <title>Cloning of human full open reading frames in Gateway(TM) system entry vector (pDONR201).</title>
        <authorList>
            <person name="Halleck A."/>
            <person name="Ebert L."/>
            <person name="Mkoundinya M."/>
            <person name="Schick M."/>
            <person name="Eisenstein S."/>
            <person name="Neubert P."/>
            <person name="Kstrang K."/>
            <person name="Schatten R."/>
            <person name="Shen B."/>
            <person name="Henze S."/>
            <person name="Mar W."/>
            <person name="Korn B."/>
            <person name="Zuo D."/>
            <person name="Hu Y."/>
            <person name="LaBaer J."/>
        </authorList>
    </citation>
    <scope>NUCLEOTIDE SEQUENCE [LARGE SCALE MRNA] (ISOFORM 1)</scope>
</reference>
<reference key="7">
    <citation type="journal article" date="2004" name="Nature">
        <title>The sequence and analysis of duplication-rich human chromosome 16.</title>
        <authorList>
            <person name="Martin J."/>
            <person name="Han C."/>
            <person name="Gordon L.A."/>
            <person name="Terry A."/>
            <person name="Prabhakar S."/>
            <person name="She X."/>
            <person name="Xie G."/>
            <person name="Hellsten U."/>
            <person name="Chan Y.M."/>
            <person name="Altherr M."/>
            <person name="Couronne O."/>
            <person name="Aerts A."/>
            <person name="Bajorek E."/>
            <person name="Black S."/>
            <person name="Blumer H."/>
            <person name="Branscomb E."/>
            <person name="Brown N.C."/>
            <person name="Bruno W.J."/>
            <person name="Buckingham J.M."/>
            <person name="Callen D.F."/>
            <person name="Campbell C.S."/>
            <person name="Campbell M.L."/>
            <person name="Campbell E.W."/>
            <person name="Caoile C."/>
            <person name="Challacombe J.F."/>
            <person name="Chasteen L.A."/>
            <person name="Chertkov O."/>
            <person name="Chi H.C."/>
            <person name="Christensen M."/>
            <person name="Clark L.M."/>
            <person name="Cohn J.D."/>
            <person name="Denys M."/>
            <person name="Detter J.C."/>
            <person name="Dickson M."/>
            <person name="Dimitrijevic-Bussod M."/>
            <person name="Escobar J."/>
            <person name="Fawcett J.J."/>
            <person name="Flowers D."/>
            <person name="Fotopulos D."/>
            <person name="Glavina T."/>
            <person name="Gomez M."/>
            <person name="Gonzales E."/>
            <person name="Goodstein D."/>
            <person name="Goodwin L.A."/>
            <person name="Grady D.L."/>
            <person name="Grigoriev I."/>
            <person name="Groza M."/>
            <person name="Hammon N."/>
            <person name="Hawkins T."/>
            <person name="Haydu L."/>
            <person name="Hildebrand C.E."/>
            <person name="Huang W."/>
            <person name="Israni S."/>
            <person name="Jett J."/>
            <person name="Jewett P.B."/>
            <person name="Kadner K."/>
            <person name="Kimball H."/>
            <person name="Kobayashi A."/>
            <person name="Krawczyk M.-C."/>
            <person name="Leyba T."/>
            <person name="Longmire J.L."/>
            <person name="Lopez F."/>
            <person name="Lou Y."/>
            <person name="Lowry S."/>
            <person name="Ludeman T."/>
            <person name="Manohar C.F."/>
            <person name="Mark G.A."/>
            <person name="McMurray K.L."/>
            <person name="Meincke L.J."/>
            <person name="Morgan J."/>
            <person name="Moyzis R.K."/>
            <person name="Mundt M.O."/>
            <person name="Munk A.C."/>
            <person name="Nandkeshwar R.D."/>
            <person name="Pitluck S."/>
            <person name="Pollard M."/>
            <person name="Predki P."/>
            <person name="Parson-Quintana B."/>
            <person name="Ramirez L."/>
            <person name="Rash S."/>
            <person name="Retterer J."/>
            <person name="Ricke D.O."/>
            <person name="Robinson D.L."/>
            <person name="Rodriguez A."/>
            <person name="Salamov A."/>
            <person name="Saunders E.H."/>
            <person name="Scott D."/>
            <person name="Shough T."/>
            <person name="Stallings R.L."/>
            <person name="Stalvey M."/>
            <person name="Sutherland R.D."/>
            <person name="Tapia R."/>
            <person name="Tesmer J.G."/>
            <person name="Thayer N."/>
            <person name="Thompson L.S."/>
            <person name="Tice H."/>
            <person name="Torney D.C."/>
            <person name="Tran-Gyamfi M."/>
            <person name="Tsai M."/>
            <person name="Ulanovsky L.E."/>
            <person name="Ustaszewska A."/>
            <person name="Vo N."/>
            <person name="White P.S."/>
            <person name="Williams A.L."/>
            <person name="Wills P.L."/>
            <person name="Wu J.-R."/>
            <person name="Wu K."/>
            <person name="Yang J."/>
            <person name="DeJong P."/>
            <person name="Bruce D."/>
            <person name="Doggett N.A."/>
            <person name="Deaven L."/>
            <person name="Schmutz J."/>
            <person name="Grimwood J."/>
            <person name="Richardson P."/>
            <person name="Rokhsar D.S."/>
            <person name="Eichler E.E."/>
            <person name="Gilna P."/>
            <person name="Lucas S.M."/>
            <person name="Myers R.M."/>
            <person name="Rubin E.M."/>
            <person name="Pennacchio L.A."/>
        </authorList>
    </citation>
    <scope>NUCLEOTIDE SEQUENCE [LARGE SCALE GENOMIC DNA]</scope>
</reference>
<reference key="8">
    <citation type="submission" date="2005-07" db="EMBL/GenBank/DDBJ databases">
        <authorList>
            <person name="Mural R.J."/>
            <person name="Istrail S."/>
            <person name="Sutton G.G."/>
            <person name="Florea L."/>
            <person name="Halpern A.L."/>
            <person name="Mobarry C.M."/>
            <person name="Lippert R."/>
            <person name="Walenz B."/>
            <person name="Shatkay H."/>
            <person name="Dew I."/>
            <person name="Miller J.R."/>
            <person name="Flanigan M.J."/>
            <person name="Edwards N.J."/>
            <person name="Bolanos R."/>
            <person name="Fasulo D."/>
            <person name="Halldorsson B.V."/>
            <person name="Hannenhalli S."/>
            <person name="Turner R."/>
            <person name="Yooseph S."/>
            <person name="Lu F."/>
            <person name="Nusskern D.R."/>
            <person name="Shue B.C."/>
            <person name="Zheng X.H."/>
            <person name="Zhong F."/>
            <person name="Delcher A.L."/>
            <person name="Huson D.H."/>
            <person name="Kravitz S.A."/>
            <person name="Mouchard L."/>
            <person name="Reinert K."/>
            <person name="Remington K.A."/>
            <person name="Clark A.G."/>
            <person name="Waterman M.S."/>
            <person name="Eichler E.E."/>
            <person name="Adams M.D."/>
            <person name="Hunkapiller M.W."/>
            <person name="Myers E.W."/>
            <person name="Venter J.C."/>
        </authorList>
    </citation>
    <scope>NUCLEOTIDE SEQUENCE [LARGE SCALE GENOMIC DNA]</scope>
</reference>
<reference key="9">
    <citation type="journal article" date="2004" name="Genome Res.">
        <title>The status, quality, and expansion of the NIH full-length cDNA project: the Mammalian Gene Collection (MGC).</title>
        <authorList>
            <consortium name="The MGC Project Team"/>
        </authorList>
    </citation>
    <scope>NUCLEOTIDE SEQUENCE [LARGE SCALE MRNA] (ISOFORM 1)</scope>
    <source>
        <tissue>Cervix</tissue>
        <tissue>Eye</tissue>
        <tissue>Lung</tissue>
        <tissue>Testis</tissue>
        <tissue>Uterus</tissue>
    </source>
</reference>
<reference key="10">
    <citation type="journal article" date="1987" name="J. Mol. Biol.">
        <title>Characterization of three optional promoters in the 5' region of the human aldolase A gene.</title>
        <authorList>
            <person name="Maire P."/>
            <person name="Gautron S."/>
            <person name="Hakim V."/>
            <person name="Gregori C."/>
            <person name="Mennecier F."/>
            <person name="Kahn A."/>
        </authorList>
    </citation>
    <scope>NUCLEOTIDE SEQUENCE [GENOMIC DNA] OF 1-108 (ISOFORM 1)</scope>
</reference>
<reference key="11">
    <citation type="journal article" date="1988" name="Biochem. J.">
        <title>The complete amino acid sequence of human skeletal-muscle fructose-bisphosphate aldolase.</title>
        <authorList>
            <person name="Freemont P.S."/>
            <person name="Dunbar B."/>
            <person name="Fothergill-Gilmore L.A."/>
        </authorList>
    </citation>
    <scope>PROTEIN SEQUENCE OF 2-364</scope>
</reference>
<reference key="12">
    <citation type="journal article" date="1984" name="Arch. Biochem. Biophys.">
        <title>Human skeletal-muscle aldolase: N-terminal sequence analysis of CNBr- and o-iodosobenzoic acid-cleavage fragments.</title>
        <authorList>
            <person name="Freemont P.S."/>
            <person name="Dunbar B."/>
            <person name="Fothergill L.A."/>
        </authorList>
    </citation>
    <scope>PROTEIN SEQUENCE OF 2-63 AND 148-358</scope>
</reference>
<reference key="13">
    <citation type="journal article" date="2003" name="Nat. Biotechnol.">
        <title>Exploring proteomes and analyzing protein processing by mass spectrometric identification of sorted N-terminal peptides.</title>
        <authorList>
            <person name="Gevaert K."/>
            <person name="Goethals M."/>
            <person name="Martens L."/>
            <person name="Van Damme J."/>
            <person name="Staes A."/>
            <person name="Thomas G.R."/>
            <person name="Vandekerckhove J."/>
        </authorList>
    </citation>
    <scope>PROTEIN SEQUENCE OF 2-22</scope>
    <source>
        <tissue>Platelet</tissue>
    </source>
</reference>
<reference key="14">
    <citation type="journal article" date="1992" name="Biochim. Biophys. Acta">
        <title>Identification of transglutaminase substrates in HT29 colon cancer cells: use of 5-(biotinamido)pentylamine as a transglutaminase-specific probe.</title>
        <authorList>
            <person name="Lee K.N."/>
            <person name="Maxwell M.D."/>
            <person name="Patterson M.K. Jr."/>
            <person name="Birckbichler P.J."/>
            <person name="Conway E."/>
        </authorList>
    </citation>
    <scope>PROTEIN SEQUENCE OF 2-16</scope>
    <source>
        <tissue>Colon carcinoma</tissue>
    </source>
</reference>
<reference key="15">
    <citation type="submission" date="2008-12" db="UniProtKB">
        <authorList>
            <person name="Lubec G."/>
            <person name="Vishwanath V."/>
            <person name="Chen W.-Q."/>
            <person name="Sun Y."/>
        </authorList>
    </citation>
    <scope>PROTEIN SEQUENCE OF 2-13; 29-42; 44-56; 61-69; 88-99; 154-173; 244-258 AND 332-342</scope>
    <scope>IDENTIFICATION BY MASS SPECTROMETRY</scope>
    <source>
        <tissue>Brain</tissue>
        <tissue>Cajal-Retzius cell</tissue>
        <tissue>Fetal brain cortex</tissue>
    </source>
</reference>
<reference key="16">
    <citation type="journal article" date="1987" name="Am. J. Hum. Genet.">
        <title>Evolutionary implications of the human aldolase-A, -B, -C, and - pseudogene chromosome locations.</title>
        <authorList>
            <person name="Tolan D.R."/>
            <person name="Niclas J."/>
            <person name="Bruce B.D."/>
            <person name="Lebo R.V."/>
        </authorList>
    </citation>
    <scope>NUCLEOTIDE SEQUENCE [MRNA] OF 139-364 (ISOFORM 1/2)</scope>
</reference>
<reference key="17">
    <citation type="journal article" date="1990" name="Mol. Biochem. Parasitol.">
        <title>Expression, purification, biochemical characterization and inhibition of recombinant Plasmodium falciparum aldolase.</title>
        <authorList>
            <person name="Doebeli H."/>
            <person name="Trzeciak A."/>
            <person name="Gillessen D."/>
            <person name="Matile H."/>
            <person name="Srivastava I.K."/>
            <person name="Perrin L.H."/>
            <person name="Jakob P.E."/>
            <person name="Certa U."/>
        </authorList>
    </citation>
    <scope>CATALYTIC ACTIVITY</scope>
    <scope>BIOPHYSICOCHEMICAL PROPERTIES</scope>
</reference>
<reference key="18">
    <citation type="journal article" date="2003" name="Nature">
        <title>Proteomic characterization of the human centrosome by protein correlation profiling.</title>
        <authorList>
            <person name="Andersen J.S."/>
            <person name="Wilkinson C.J."/>
            <person name="Mayor T."/>
            <person name="Mortensen P."/>
            <person name="Nigg E.A."/>
            <person name="Mann M."/>
        </authorList>
    </citation>
    <scope>IDENTIFICATION BY MASS SPECTROMETRY</scope>
    <source>
        <tissue>Lymphoblast</tissue>
    </source>
</reference>
<reference key="19">
    <citation type="journal article" date="2006" name="Cell">
        <title>Global, in vivo, and site-specific phosphorylation dynamics in signaling networks.</title>
        <authorList>
            <person name="Olsen J.V."/>
            <person name="Blagoev B."/>
            <person name="Gnad F."/>
            <person name="Macek B."/>
            <person name="Kumar C."/>
            <person name="Mortensen P."/>
            <person name="Mann M."/>
        </authorList>
    </citation>
    <scope>PHOSPHORYLATION [LARGE SCALE ANALYSIS] AT SER-46</scope>
    <scope>IDENTIFICATION BY MASS SPECTROMETRY [LARGE SCALE ANALYSIS]</scope>
    <source>
        <tissue>Cervix carcinoma</tissue>
    </source>
</reference>
<reference key="20">
    <citation type="journal article" date="2008" name="Proc. Natl. Acad. Sci. U.S.A.">
        <title>A quantitative atlas of mitotic phosphorylation.</title>
        <authorList>
            <person name="Dephoure N."/>
            <person name="Zhou C."/>
            <person name="Villen J."/>
            <person name="Beausoleil S.A."/>
            <person name="Bakalarski C.E."/>
            <person name="Elledge S.J."/>
            <person name="Gygi S.P."/>
        </authorList>
    </citation>
    <scope>IDENTIFICATION BY MASS SPECTROMETRY [LARGE SCALE ANALYSIS]</scope>
    <source>
        <tissue>Cervix carcinoma</tissue>
    </source>
</reference>
<reference key="21">
    <citation type="journal article" date="2008" name="Proteins">
        <title>Evolutionary conserved N-terminal region of human muscle fructose 1,6-bisphosphatase regulates its activity and the interaction with aldolase.</title>
        <authorList>
            <person name="Gizak A."/>
            <person name="Maciaszczyk E."/>
            <person name="Dzugaj A."/>
            <person name="Eschrich K."/>
            <person name="Rakus D."/>
        </authorList>
    </citation>
    <scope>INTERACTION WITH FBP2</scope>
</reference>
<reference key="22">
    <citation type="journal article" date="2009" name="Anal. Chem.">
        <title>Lys-N and trypsin cover complementary parts of the phosphoproteome in a refined SCX-based approach.</title>
        <authorList>
            <person name="Gauci S."/>
            <person name="Helbig A.O."/>
            <person name="Slijper M."/>
            <person name="Krijgsveld J."/>
            <person name="Heck A.J."/>
            <person name="Mohammed S."/>
        </authorList>
    </citation>
    <scope>IDENTIFICATION BY MASS SPECTROMETRY [LARGE SCALE ANALYSIS]</scope>
</reference>
<reference key="23">
    <citation type="journal article" date="2009" name="Sci. Signal.">
        <title>Quantitative phosphoproteomic analysis of T cell receptor signaling reveals system-wide modulation of protein-protein interactions.</title>
        <authorList>
            <person name="Mayya V."/>
            <person name="Lundgren D.H."/>
            <person name="Hwang S.-I."/>
            <person name="Rezaul K."/>
            <person name="Wu L."/>
            <person name="Eng J.K."/>
            <person name="Rodionov V."/>
            <person name="Han D.K."/>
        </authorList>
    </citation>
    <scope>PHOSPHORYLATION [LARGE SCALE ANALYSIS] AT SER-36 AND SER-39</scope>
    <scope>IDENTIFICATION BY MASS SPECTROMETRY [LARGE SCALE ANALYSIS]</scope>
    <source>
        <tissue>Leukemic T-cell</tissue>
    </source>
</reference>
<reference key="24">
    <citation type="journal article" date="2009" name="Science">
        <title>Lysine acetylation targets protein complexes and co-regulates major cellular functions.</title>
        <authorList>
            <person name="Choudhary C."/>
            <person name="Kumar C."/>
            <person name="Gnad F."/>
            <person name="Nielsen M.L."/>
            <person name="Rehman M."/>
            <person name="Walther T.C."/>
            <person name="Olsen J.V."/>
            <person name="Mann M."/>
        </authorList>
    </citation>
    <scope>ACETYLATION [LARGE SCALE ANALYSIS] AT LYS-42; LYS-108 AND LYS-330</scope>
    <scope>IDENTIFICATION BY MASS SPECTROMETRY [LARGE SCALE ANALYSIS]</scope>
</reference>
<reference key="25">
    <citation type="journal article" date="2010" name="Sci. Signal.">
        <title>Quantitative phosphoproteomics reveals widespread full phosphorylation site occupancy during mitosis.</title>
        <authorList>
            <person name="Olsen J.V."/>
            <person name="Vermeulen M."/>
            <person name="Santamaria A."/>
            <person name="Kumar C."/>
            <person name="Miller M.L."/>
            <person name="Jensen L.J."/>
            <person name="Gnad F."/>
            <person name="Cox J."/>
            <person name="Jensen T.S."/>
            <person name="Nigg E.A."/>
            <person name="Brunak S."/>
            <person name="Mann M."/>
        </authorList>
    </citation>
    <scope>PHOSPHORYLATION [LARGE SCALE ANALYSIS] AT SER-36 AND SER-39</scope>
    <scope>IDENTIFICATION BY MASS SPECTROMETRY [LARGE SCALE ANALYSIS]</scope>
    <source>
        <tissue>Cervix carcinoma</tissue>
    </source>
</reference>
<reference key="26">
    <citation type="journal article" date="2011" name="BMC Syst. Biol.">
        <title>Initial characterization of the human central proteome.</title>
        <authorList>
            <person name="Burkard T.R."/>
            <person name="Planyavsky M."/>
            <person name="Kaupe I."/>
            <person name="Breitwieser F.P."/>
            <person name="Buerckstuemmer T."/>
            <person name="Bennett K.L."/>
            <person name="Superti-Furga G."/>
            <person name="Colinge J."/>
        </authorList>
    </citation>
    <scope>IDENTIFICATION BY MASS SPECTROMETRY [LARGE SCALE ANALYSIS]</scope>
</reference>
<reference key="27">
    <citation type="journal article" date="2011" name="Mol. Cell. Proteomics">
        <title>The first identification of lysine malonylation substrates and its regulatory enzyme.</title>
        <authorList>
            <person name="Peng C."/>
            <person name="Lu Z."/>
            <person name="Xie Z."/>
            <person name="Cheng Z."/>
            <person name="Chen Y."/>
            <person name="Tan M."/>
            <person name="Luo H."/>
            <person name="Zhang Y."/>
            <person name="He W."/>
            <person name="Yang K."/>
            <person name="Zwaans B.M."/>
            <person name="Tishkoff D."/>
            <person name="Ho L."/>
            <person name="Lombard D."/>
            <person name="He T.C."/>
            <person name="Dai J."/>
            <person name="Verdin E."/>
            <person name="Ye Y."/>
            <person name="Zhao Y."/>
        </authorList>
    </citation>
    <scope>MALONYLATION AT LYS-111 AND LYS-312</scope>
</reference>
<reference key="28">
    <citation type="journal article" date="2011" name="Sci. Signal.">
        <title>System-wide temporal characterization of the proteome and phosphoproteome of human embryonic stem cell differentiation.</title>
        <authorList>
            <person name="Rigbolt K.T."/>
            <person name="Prokhorova T.A."/>
            <person name="Akimov V."/>
            <person name="Henningsen J."/>
            <person name="Johansen P.T."/>
            <person name="Kratchmarova I."/>
            <person name="Kassem M."/>
            <person name="Mann M."/>
            <person name="Olsen J.V."/>
            <person name="Blagoev B."/>
        </authorList>
    </citation>
    <scope>PHOSPHORYLATION [LARGE SCALE ANALYSIS] AT SER-39 AND SER-46</scope>
    <scope>IDENTIFICATION BY MASS SPECTROMETRY [LARGE SCALE ANALYSIS]</scope>
</reference>
<reference key="29">
    <citation type="journal article" date="2012" name="J. Proteome Res.">
        <title>Resveratrol-induced changes of the human adipocyte secretion profile.</title>
        <authorList>
            <person name="Rosenow A."/>
            <person name="Noben J.P."/>
            <person name="Jocken J."/>
            <person name="Kallendrusch S."/>
            <person name="Fischer-Posovszky P."/>
            <person name="Mariman E.C."/>
            <person name="Renes J."/>
        </authorList>
    </citation>
    <scope>IDENTIFICATION BY MASS SPECTROMETRY [LARGE SCALE ANALYSIS]</scope>
</reference>
<reference key="30">
    <citation type="journal article" date="2012" name="Mol. Cell. Proteomics">
        <title>Comparative large-scale characterisation of plant vs. mammal proteins reveals similar and idiosyncratic N-alpha acetylation features.</title>
        <authorList>
            <person name="Bienvenut W.V."/>
            <person name="Sumpton D."/>
            <person name="Martinez A."/>
            <person name="Lilla S."/>
            <person name="Espagne C."/>
            <person name="Meinnel T."/>
            <person name="Giglione C."/>
        </authorList>
    </citation>
    <scope>CLEAVAGE OF INITIATOR METHIONINE [LARGE SCALE ANALYSIS]</scope>
    <scope>IDENTIFICATION BY MASS SPECTROMETRY [LARGE SCALE ANALYSIS]</scope>
</reference>
<reference key="31">
    <citation type="journal article" date="2012" name="Proc. Natl. Acad. Sci. U.S.A.">
        <title>N-terminal acetylome analyses and functional insights of the N-terminal acetyltransferase NatB.</title>
        <authorList>
            <person name="Van Damme P."/>
            <person name="Lasa M."/>
            <person name="Polevoda B."/>
            <person name="Gazquez C."/>
            <person name="Elosegui-Artola A."/>
            <person name="Kim D.S."/>
            <person name="De Juan-Pardo E."/>
            <person name="Demeyer K."/>
            <person name="Hole K."/>
            <person name="Larrea E."/>
            <person name="Timmerman E."/>
            <person name="Prieto J."/>
            <person name="Arnesen T."/>
            <person name="Sherman F."/>
            <person name="Gevaert K."/>
            <person name="Aldabe R."/>
        </authorList>
    </citation>
    <scope>IDENTIFICATION BY MASS SPECTROMETRY [LARGE SCALE ANALYSIS]</scope>
</reference>
<reference key="32">
    <citation type="journal article" date="2013" name="J. Proteome Res.">
        <title>Toward a comprehensive characterization of a human cancer cell phosphoproteome.</title>
        <authorList>
            <person name="Zhou H."/>
            <person name="Di Palma S."/>
            <person name="Preisinger C."/>
            <person name="Peng M."/>
            <person name="Polat A.N."/>
            <person name="Heck A.J."/>
            <person name="Mohammed S."/>
        </authorList>
    </citation>
    <scope>PHOSPHORYLATION [LARGE SCALE ANALYSIS] AT THR-9; SER-36; SER-39 AND SER-46</scope>
    <scope>IDENTIFICATION BY MASS SPECTROMETRY [LARGE SCALE ANALYSIS]</scope>
    <source>
        <tissue>Cervix carcinoma</tissue>
        <tissue>Erythroleukemia</tissue>
    </source>
</reference>
<reference key="33">
    <citation type="journal article" date="2014" name="J. Proteomics">
        <title>An enzyme assisted RP-RPLC approach for in-depth analysis of human liver phosphoproteome.</title>
        <authorList>
            <person name="Bian Y."/>
            <person name="Song C."/>
            <person name="Cheng K."/>
            <person name="Dong M."/>
            <person name="Wang F."/>
            <person name="Huang J."/>
            <person name="Sun D."/>
            <person name="Wang L."/>
            <person name="Ye M."/>
            <person name="Zou H."/>
        </authorList>
    </citation>
    <scope>PHOSPHORYLATION [LARGE SCALE ANALYSIS] AT SER-39; SER-46 AND SER-272</scope>
    <scope>IDENTIFICATION BY MASS SPECTROMETRY [LARGE SCALE ANALYSIS]</scope>
    <source>
        <tissue>Liver</tissue>
    </source>
</reference>
<reference key="34">
    <citation type="journal article" date="2014" name="Mol. Cell. Proteomics">
        <title>Immunoaffinity enrichment and mass spectrometry analysis of protein methylation.</title>
        <authorList>
            <person name="Guo A."/>
            <person name="Gu H."/>
            <person name="Zhou J."/>
            <person name="Mulhern D."/>
            <person name="Wang Y."/>
            <person name="Lee K.A."/>
            <person name="Yang V."/>
            <person name="Aguiar M."/>
            <person name="Kornhauser J."/>
            <person name="Jia X."/>
            <person name="Ren J."/>
            <person name="Beausoleil S.A."/>
            <person name="Silva J.C."/>
            <person name="Vemulapalli V."/>
            <person name="Bedford M.T."/>
            <person name="Comb M.J."/>
        </authorList>
    </citation>
    <scope>IDENTIFICATION BY MASS SPECTROMETRY [LARGE SCALE ANALYSIS]</scope>
    <source>
        <tissue>Colon carcinoma</tissue>
    </source>
</reference>
<reference key="35">
    <citation type="journal article" date="2014" name="Proc. Natl. Acad. Sci. U.S.A.">
        <title>Mapping of SUMO sites and analysis of SUMOylation changes induced by external stimuli.</title>
        <authorList>
            <person name="Impens F."/>
            <person name="Radoshevich L."/>
            <person name="Cossart P."/>
            <person name="Ribet D."/>
        </authorList>
    </citation>
    <scope>SUMOYLATION [LARGE SCALE ANALYSIS] AT LYS-42</scope>
    <scope>IDENTIFICATION BY MASS SPECTROMETRY [LARGE SCALE ANALYSIS]</scope>
</reference>
<reference key="36">
    <citation type="journal article" date="2015" name="Proteomics">
        <title>N-terminome analysis of the human mitochondrial proteome.</title>
        <authorList>
            <person name="Vaca Jacome A.S."/>
            <person name="Rabilloud T."/>
            <person name="Schaeffer-Reiss C."/>
            <person name="Rompais M."/>
            <person name="Ayoub D."/>
            <person name="Lane L."/>
            <person name="Bairoch A."/>
            <person name="Van Dorsselaer A."/>
            <person name="Carapito C."/>
        </authorList>
    </citation>
    <scope>IDENTIFICATION BY MASS SPECTROMETRY [LARGE SCALE ANALYSIS]</scope>
</reference>
<reference key="37">
    <citation type="journal article" date="2018" name="Cell Res.">
        <title>Landscape of the regulatory elements for lysine 2-hydroxyisobutyrylation pathway.</title>
        <authorList>
            <person name="Huang H."/>
            <person name="Luo Z."/>
            <person name="Qi S."/>
            <person name="Huang J."/>
            <person name="Xu P."/>
            <person name="Wang X."/>
            <person name="Gao L."/>
            <person name="Li F."/>
            <person name="Wang J."/>
            <person name="Zhao W."/>
            <person name="Gu W."/>
            <person name="Chen Z."/>
            <person name="Dai L."/>
            <person name="Dai J."/>
            <person name="Zhao Y."/>
        </authorList>
    </citation>
    <scope>HYDROXYBUTYRYLATION AT LYS-147</scope>
</reference>
<reference key="38">
    <citation type="journal article" date="2018" name="Mol. Cell">
        <title>p300-mediated lysine 2-hydroxyisobutyrylation regulates glycolysis.</title>
        <authorList>
            <person name="Huang H."/>
            <person name="Tang S."/>
            <person name="Ji M."/>
            <person name="Tang Z."/>
            <person name="Shimada M."/>
            <person name="Liu X."/>
            <person name="Qi S."/>
            <person name="Locasale J.W."/>
            <person name="Roeder R.G."/>
            <person name="Zhao Y."/>
            <person name="Li X."/>
        </authorList>
    </citation>
    <scope>HYDROXYBUTYRYLATION AT LYS-99</scope>
</reference>
<reference key="39">
    <citation type="journal article" date="1990" name="FEBS Lett.">
        <title>The crystal structure of human muscle aldolase at 3.0-A resolution.</title>
        <authorList>
            <person name="Gamblin S.J."/>
            <person name="Cooper B."/>
            <person name="Millar J.R."/>
            <person name="Davies G.J."/>
            <person name="Littlechild J.A."/>
            <person name="Watson H.C."/>
        </authorList>
    </citation>
    <scope>X-RAY CRYSTALLOGRAPHY (3.0 ANGSTROMS)</scope>
</reference>
<reference key="40">
    <citation type="journal article" date="1991" name="J. Mol. Biol.">
        <title>Activity and specificity of human aldolases.</title>
        <authorList>
            <person name="Gamblin S.J."/>
            <person name="Davies G.J."/>
            <person name="Grimes J.M."/>
            <person name="Jackson R.M."/>
            <person name="Littlechild J.A."/>
            <person name="Watson H.C."/>
        </authorList>
    </citation>
    <scope>X-RAY CRYSTALLOGRAPHY (2.0 ANGSTROMS)</scope>
</reference>
<reference key="41">
    <citation type="journal article" date="1999" name="Protein Sci.">
        <title>Crystal structure of human muscle aldolase complexed with fructose 1,6-bisphosphate: mechanistic implications.</title>
        <authorList>
            <person name="Dalby A."/>
            <person name="Dauter Z."/>
            <person name="Littlechild J.A."/>
        </authorList>
    </citation>
    <scope>X-RAY CRYSTALLOGRAPHY (2.8 ANGSTROMS)</scope>
</reference>
<reference key="42">
    <citation type="journal article" date="1987" name="Proc. Natl. Acad. Sci. U.S.A.">
        <title>Human aldolase A deficiency associated with a hemolytic anemia: thermolabile aldolase due to a single base mutation.</title>
        <authorList>
            <person name="Kishi H."/>
            <person name="Mukai T."/>
            <person name="Hirono A."/>
            <person name="Fujii H."/>
            <person name="Miwa S."/>
            <person name="Hori K."/>
        </authorList>
    </citation>
    <scope>VARIANT GSD12 GLY-129</scope>
    <scope>CHARACTERIZATION OF VARIANT GSD12 GLY-129</scope>
</reference>
<reference key="43">
    <citation type="journal article" date="1990" name="J. Biochem.">
        <title>Human aldolase A of a hemolytic anemia patient with Asp-128--&gt;Gly substitution: characteristics of an enzyme generated in E. coli transfected with the expression plasmid pHAAD128G.</title>
        <authorList>
            <person name="Takasaki Y."/>
            <person name="Takahashi I."/>
            <person name="Mukai T."/>
            <person name="Hori K."/>
        </authorList>
    </citation>
    <scope>CHARACTERIZATION OF VARIANT GSD12 GLY-129</scope>
</reference>
<reference key="44">
    <citation type="journal article" date="1996" name="N. Engl. J. Med.">
        <title>Brief report: inherited metabolic myopathy and hemolysis due to a mutation in aldolase A.</title>
        <authorList>
            <person name="Kreuder J."/>
            <person name="Borkhardt A."/>
            <person name="Repp R."/>
            <person name="Pekrun A."/>
            <person name="Goettsche B."/>
            <person name="Gottschalk U."/>
            <person name="Reichmann H."/>
            <person name="Schachenmayr W."/>
            <person name="Schlegel K."/>
            <person name="Lampert F."/>
        </authorList>
    </citation>
    <scope>VARIANT GSD12 LYS-207</scope>
</reference>
<reference key="45">
    <citation type="journal article" date="2004" name="Blood">
        <title>Hemolytic anemia and severe rhabdomyolysis caused by compound heterozygous mutations of the gene for erythrocyte/muscle isozyme of aldolase, ALDOA(Arg303X/Cys338Tyr).</title>
        <authorList>
            <person name="Yao D.C."/>
            <person name="Tolan D.R."/>
            <person name="Murray M.F."/>
            <person name="Harris D.J."/>
            <person name="Darras B.T."/>
            <person name="Geva A."/>
            <person name="Neufeld E.J."/>
        </authorList>
    </citation>
    <scope>VARIANTS GSD12 303-GLY--TYR-364 DEL AND TYR-339</scope>
</reference>
<reference key="46">
    <citation type="journal article" date="2004" name="Biochem. J.">
        <title>Human aldolase A natural mutants: relationship between flexibility of the C-terminal region and enzyme function.</title>
        <authorList>
            <person name="Esposito G."/>
            <person name="Vitagliano L."/>
            <person name="Costanzo P."/>
            <person name="Borrelli L."/>
            <person name="Barone R."/>
            <person name="Pavone L."/>
            <person name="Izzo P."/>
            <person name="Zagari A."/>
            <person name="Salvatore F."/>
        </authorList>
    </citation>
    <scope>VARIANT GSD12 SER-347</scope>
    <scope>BIOPHYSICOCHEMICAL PROPERTIES</scope>
    <scope>CHARACTERIZATION OF VARIANTS GSD12 LYS-207 AND SER-347</scope>
    <scope>CATALYTIC ACTIVITY</scope>
    <scope>FUNCTION</scope>
</reference>
<name>ALDOA_HUMAN</name>
<accession>P04075</accession>
<accession>B4DXI7</accession>
<accession>Q6FH76</accession>
<accession>Q6FI10</accession>
<accession>Q96B15</accession>
<accession>Q9BWD9</accession>
<accession>Q9UCN2</accession>
<protein>
    <recommendedName>
        <fullName evidence="21">Fructose-bisphosphate aldolase A</fullName>
        <ecNumber evidence="8 11">4.1.2.13</ecNumber>
    </recommendedName>
    <alternativeName>
        <fullName>Lung cancer antigen NY-LU-1</fullName>
    </alternativeName>
    <alternativeName>
        <fullName>Muscle-type aldolase</fullName>
    </alternativeName>
</protein>
<feature type="initiator methionine" description="Removed" evidence="5 6 16 17 19 29">
    <location>
        <position position="1"/>
    </location>
</feature>
<feature type="chain" id="PRO_0000216936" description="Fructose-bisphosphate aldolase A">
    <location>
        <begin position="2"/>
        <end position="364"/>
    </location>
</feature>
<feature type="active site" description="Proton acceptor" evidence="2">
    <location>
        <position position="188"/>
    </location>
</feature>
<feature type="active site" description="Schiff-base intermediate with dihydroxyacetone-P" evidence="2">
    <location>
        <position position="230"/>
    </location>
</feature>
<feature type="binding site" evidence="2">
    <location>
        <position position="43"/>
    </location>
    <ligand>
        <name>beta-D-fructose 1,6-bisphosphate</name>
        <dbReference type="ChEBI" id="CHEBI:32966"/>
    </ligand>
</feature>
<feature type="binding site" evidence="2">
    <location>
        <begin position="272"/>
        <end position="274"/>
    </location>
    <ligand>
        <name>beta-D-fructose 1,6-bisphosphate</name>
        <dbReference type="ChEBI" id="CHEBI:32966"/>
    </ligand>
</feature>
<feature type="binding site" evidence="2">
    <location>
        <position position="301"/>
    </location>
    <ligand>
        <name>beta-D-fructose 1,6-bisphosphate</name>
        <dbReference type="ChEBI" id="CHEBI:32966"/>
    </ligand>
</feature>
<feature type="binding site" evidence="2">
    <location>
        <position position="304"/>
    </location>
    <ligand>
        <name>beta-D-fructose 1,6-bisphosphate</name>
        <dbReference type="ChEBI" id="CHEBI:32966"/>
    </ligand>
</feature>
<feature type="site" description="Necessary for preference for fructose 1,6-bisphosphate over fructose 1-phosphate">
    <location>
        <position position="364"/>
    </location>
</feature>
<feature type="modified residue" description="Phosphotyrosine" evidence="3">
    <location>
        <position position="5"/>
    </location>
</feature>
<feature type="modified residue" description="Phosphothreonine" evidence="30">
    <location>
        <position position="9"/>
    </location>
</feature>
<feature type="modified residue" description="Phosphoserine" evidence="26 27 30">
    <location>
        <position position="36"/>
    </location>
</feature>
<feature type="modified residue" description="Phosphoserine" evidence="26 27 28 30 31">
    <location>
        <position position="39"/>
    </location>
</feature>
<feature type="modified residue" description="N6-acetyllysine; alternate" evidence="25">
    <location>
        <position position="42"/>
    </location>
</feature>
<feature type="modified residue" description="Phosphoserine" evidence="24 28 30 31">
    <location>
        <position position="46"/>
    </location>
</feature>
<feature type="modified residue" description="N6-(2-hydroxyisobutyryl)lysine" evidence="15">
    <location>
        <position position="99"/>
    </location>
</feature>
<feature type="modified residue" description="N6-acetyllysine" evidence="25">
    <location>
        <position position="108"/>
    </location>
</feature>
<feature type="modified residue" description="N6-acetyllysine; alternate" evidence="4">
    <location>
        <position position="111"/>
    </location>
</feature>
<feature type="modified residue" description="N6-malonyllysine; alternate" evidence="10">
    <location>
        <position position="111"/>
    </location>
</feature>
<feature type="modified residue" description="Phosphoserine" evidence="3">
    <location>
        <position position="132"/>
    </location>
</feature>
<feature type="modified residue" description="N6-(2-hydroxyisobutyryl)lysine" evidence="14">
    <location>
        <position position="147"/>
    </location>
</feature>
<feature type="modified residue" description="Phosphoserine" evidence="31">
    <location>
        <position position="272"/>
    </location>
</feature>
<feature type="modified residue" description="N6-malonyllysine" evidence="10">
    <location>
        <position position="312"/>
    </location>
</feature>
<feature type="modified residue" description="N6-acetyllysine" evidence="25">
    <location>
        <position position="330"/>
    </location>
</feature>
<feature type="cross-link" description="Glycyl lysine isopeptide (Lys-Gly) (interchain with G-Cter in SUMO1); alternate" evidence="32">
    <location>
        <position position="42"/>
    </location>
</feature>
<feature type="cross-link" description="Glycyl lysine isopeptide (Lys-Gly) (interchain with G-Cter in SUMO2); alternate" evidence="32">
    <location>
        <position position="42"/>
    </location>
</feature>
<feature type="splice variant" id="VSP_047261" description="In isoform 2." evidence="20">
    <original>M</original>
    <variation>MARRKPEGSSFNMTHLSMAMAFSFPPVASGQLHPQLGNTQHQTELGKELATTSTM</variation>
    <location>
        <position position="1"/>
    </location>
</feature>
<feature type="sequence variant" id="VAR_048219" description="In dbSNP:rs11553107.">
    <original>E</original>
    <variation>Q</variation>
    <location>
        <position position="82"/>
    </location>
</feature>
<feature type="sequence variant" id="VAR_000550" description="In GSD12; thermolabile; dbSNP:rs121909533." evidence="12 13">
    <original>D</original>
    <variation>G</variation>
    <location>
        <position position="129"/>
    </location>
</feature>
<feature type="sequence variant" id="VAR_048220" description="In dbSNP:rs11553108.">
    <original>G</original>
    <variation>V</variation>
    <location>
        <position position="142"/>
    </location>
</feature>
<feature type="sequence variant" id="VAR_044142" description="In GSD12; reduces thermal stability; 3-fold decrease in catalytic efficiency mostly due to reduced substrate affinity; dbSNP:rs121909534." evidence="8 18">
    <original>E</original>
    <variation>K</variation>
    <location>
        <position position="207"/>
    </location>
</feature>
<feature type="sequence variant" id="VAR_085824" description="In GSD12." evidence="7">
    <location>
        <begin position="303"/>
        <end position="364"/>
    </location>
</feature>
<feature type="sequence variant" id="VAR_044143" description="In GSD12." evidence="7">
    <original>C</original>
    <variation>Y</variation>
    <location>
        <position position="339"/>
    </location>
</feature>
<feature type="sequence variant" id="VAR_044144" description="In GSD12; likely benign; does not affect thermal stability; 4-fold decrease in catalytic efficiency due to reduced enzyme activity; dbSNP:rs138824667." evidence="8">
    <original>G</original>
    <variation>S</variation>
    <location>
        <position position="347"/>
    </location>
</feature>
<feature type="sequence conflict" description="In Ref. 3; CAA30979." evidence="21" ref="3">
    <original>C</original>
    <variation>G</variation>
    <location>
        <position position="73"/>
    </location>
</feature>
<feature type="sequence conflict" description="In Ref. 6; CAG46678." evidence="21" ref="6">
    <original>Q</original>
    <variation>R</variation>
    <location>
        <position position="180"/>
    </location>
</feature>
<feature type="sequence conflict" description="In Ref. 3; CAA30979." evidence="21" ref="3">
    <original>D</original>
    <variation>A</variation>
    <location>
        <position position="196"/>
    </location>
</feature>
<feature type="sequence conflict" description="In Ref. 3; CAA30979." evidence="21" ref="3">
    <original>K</original>
    <variation>N</variation>
    <location>
        <position position="230"/>
    </location>
</feature>
<feature type="sequence conflict" description="In Ref. 3; CAA30979." evidence="21" ref="3">
    <original>A</original>
    <variation>S</variation>
    <location>
        <position position="280"/>
    </location>
</feature>
<feature type="helix" evidence="36">
    <location>
        <begin position="10"/>
        <end position="23"/>
    </location>
</feature>
<feature type="strand" evidence="36">
    <location>
        <begin position="29"/>
        <end position="33"/>
    </location>
</feature>
<feature type="turn" evidence="36">
    <location>
        <begin position="37"/>
        <end position="39"/>
    </location>
</feature>
<feature type="helix" evidence="36">
    <location>
        <begin position="40"/>
        <end position="45"/>
    </location>
</feature>
<feature type="turn" evidence="36">
    <location>
        <begin position="46"/>
        <end position="48"/>
    </location>
</feature>
<feature type="helix" evidence="36">
    <location>
        <begin position="53"/>
        <end position="64"/>
    </location>
</feature>
<feature type="helix" evidence="36">
    <location>
        <begin position="68"/>
        <end position="73"/>
    </location>
</feature>
<feature type="strand" evidence="36">
    <location>
        <begin position="74"/>
        <end position="79"/>
    </location>
</feature>
<feature type="helix" evidence="36">
    <location>
        <begin position="81"/>
        <end position="84"/>
    </location>
</feature>
<feature type="helix" evidence="36">
    <location>
        <begin position="94"/>
        <end position="100"/>
    </location>
</feature>
<feature type="strand" evidence="36">
    <location>
        <begin position="104"/>
        <end position="108"/>
    </location>
</feature>
<feature type="strand" evidence="36">
    <location>
        <begin position="113"/>
        <end position="115"/>
    </location>
</feature>
<feature type="strand" evidence="36">
    <location>
        <begin position="119"/>
        <end position="121"/>
    </location>
</feature>
<feature type="strand" evidence="36">
    <location>
        <begin position="123"/>
        <end position="125"/>
    </location>
</feature>
<feature type="helix" evidence="36">
    <location>
        <begin position="131"/>
        <end position="140"/>
    </location>
</feature>
<feature type="strand" evidence="36">
    <location>
        <begin position="145"/>
        <end position="152"/>
    </location>
</feature>
<feature type="strand" evidence="34">
    <location>
        <begin position="155"/>
        <end position="157"/>
    </location>
</feature>
<feature type="helix" evidence="36">
    <location>
        <begin position="161"/>
        <end position="180"/>
    </location>
</feature>
<feature type="strand" evidence="36">
    <location>
        <begin position="184"/>
        <end position="191"/>
    </location>
</feature>
<feature type="helix" evidence="36">
    <location>
        <begin position="199"/>
        <end position="219"/>
    </location>
</feature>
<feature type="helix" evidence="36">
    <location>
        <begin position="224"/>
        <end position="226"/>
    </location>
</feature>
<feature type="helix" evidence="36">
    <location>
        <begin position="246"/>
        <end position="258"/>
    </location>
</feature>
<feature type="strand" evidence="36">
    <location>
        <begin position="267"/>
        <end position="271"/>
    </location>
</feature>
<feature type="helix" evidence="36">
    <location>
        <begin position="277"/>
        <end position="289"/>
    </location>
</feature>
<feature type="strand" evidence="36">
    <location>
        <begin position="296"/>
        <end position="303"/>
    </location>
</feature>
<feature type="helix" evidence="36">
    <location>
        <begin position="304"/>
        <end position="314"/>
    </location>
</feature>
<feature type="helix" evidence="36">
    <location>
        <begin position="318"/>
        <end position="320"/>
    </location>
</feature>
<feature type="helix" evidence="36">
    <location>
        <begin position="321"/>
        <end position="338"/>
    </location>
</feature>
<feature type="turn" evidence="36">
    <location>
        <begin position="339"/>
        <end position="341"/>
    </location>
</feature>
<feature type="strand" evidence="33">
    <location>
        <begin position="348"/>
        <end position="350"/>
    </location>
</feature>
<feature type="helix" evidence="35">
    <location>
        <begin position="351"/>
        <end position="354"/>
    </location>
</feature>
<feature type="helix" evidence="34">
    <location>
        <begin position="357"/>
        <end position="359"/>
    </location>
</feature>
<feature type="helix" evidence="34">
    <location>
        <begin position="361"/>
        <end position="363"/>
    </location>
</feature>